<dbReference type="EC" id="3.4.22.30" evidence="6"/>
<dbReference type="EMBL" id="X66060">
    <property type="protein sequence ID" value="CAA46862.1"/>
    <property type="molecule type" value="mRNA"/>
</dbReference>
<dbReference type="EMBL" id="X51899">
    <property type="protein sequence ID" value="CAA36180.1"/>
    <property type="molecule type" value="mRNA"/>
</dbReference>
<dbReference type="PIR" id="JN0633">
    <property type="entry name" value="JN0633"/>
</dbReference>
<dbReference type="PDB" id="1MEG">
    <property type="method" value="X-ray"/>
    <property type="resolution" value="2.00 A"/>
    <property type="chains" value="A=133-348"/>
</dbReference>
<dbReference type="PDB" id="1PCI">
    <property type="method" value="X-ray"/>
    <property type="resolution" value="3.20 A"/>
    <property type="chains" value="A/B/C=27-348"/>
</dbReference>
<dbReference type="PDB" id="1PPO">
    <property type="method" value="X-ray"/>
    <property type="resolution" value="1.80 A"/>
    <property type="chains" value="A=133-348"/>
</dbReference>
<dbReference type="PDBsum" id="1MEG"/>
<dbReference type="PDBsum" id="1PCI"/>
<dbReference type="PDBsum" id="1PPO"/>
<dbReference type="SMR" id="P10056"/>
<dbReference type="Allergome" id="1539">
    <property type="allergen name" value="Cari p Endoproteinase"/>
</dbReference>
<dbReference type="MEROPS" id="C01.003"/>
<dbReference type="MEROPS" id="I29.003"/>
<dbReference type="KEGG" id="ag:CAA46862"/>
<dbReference type="BRENDA" id="3.4.22.30">
    <property type="organism ID" value="1191"/>
</dbReference>
<dbReference type="EvolutionaryTrace" id="P10056"/>
<dbReference type="GO" id="GO:0008234">
    <property type="term" value="F:cysteine-type peptidase activity"/>
    <property type="evidence" value="ECO:0007669"/>
    <property type="project" value="UniProtKB-KW"/>
</dbReference>
<dbReference type="GO" id="GO:0006508">
    <property type="term" value="P:proteolysis"/>
    <property type="evidence" value="ECO:0007669"/>
    <property type="project" value="UniProtKB-KW"/>
</dbReference>
<dbReference type="CDD" id="cd02248">
    <property type="entry name" value="Peptidase_C1A"/>
    <property type="match status" value="1"/>
</dbReference>
<dbReference type="FunFam" id="3.90.70.10:FF:000204">
    <property type="entry name" value="Papain"/>
    <property type="match status" value="1"/>
</dbReference>
<dbReference type="Gene3D" id="3.90.70.10">
    <property type="entry name" value="Cysteine proteinases"/>
    <property type="match status" value="1"/>
</dbReference>
<dbReference type="InterPro" id="IPR038765">
    <property type="entry name" value="Papain-like_cys_pep_sf"/>
</dbReference>
<dbReference type="InterPro" id="IPR025661">
    <property type="entry name" value="Pept_asp_AS"/>
</dbReference>
<dbReference type="InterPro" id="IPR000169">
    <property type="entry name" value="Pept_cys_AS"/>
</dbReference>
<dbReference type="InterPro" id="IPR025660">
    <property type="entry name" value="Pept_his_AS"/>
</dbReference>
<dbReference type="InterPro" id="IPR013128">
    <property type="entry name" value="Peptidase_C1A"/>
</dbReference>
<dbReference type="InterPro" id="IPR000668">
    <property type="entry name" value="Peptidase_C1A_C"/>
</dbReference>
<dbReference type="InterPro" id="IPR039417">
    <property type="entry name" value="Peptidase_C1A_papain-like"/>
</dbReference>
<dbReference type="InterPro" id="IPR013201">
    <property type="entry name" value="Prot_inhib_I29"/>
</dbReference>
<dbReference type="PANTHER" id="PTHR12411">
    <property type="entry name" value="CYSTEINE PROTEASE FAMILY C1-RELATED"/>
    <property type="match status" value="1"/>
</dbReference>
<dbReference type="Pfam" id="PF08246">
    <property type="entry name" value="Inhibitor_I29"/>
    <property type="match status" value="1"/>
</dbReference>
<dbReference type="Pfam" id="PF00112">
    <property type="entry name" value="Peptidase_C1"/>
    <property type="match status" value="1"/>
</dbReference>
<dbReference type="PRINTS" id="PR00705">
    <property type="entry name" value="PAPAIN"/>
</dbReference>
<dbReference type="SMART" id="SM00848">
    <property type="entry name" value="Inhibitor_I29"/>
    <property type="match status" value="1"/>
</dbReference>
<dbReference type="SMART" id="SM00645">
    <property type="entry name" value="Pept_C1"/>
    <property type="match status" value="1"/>
</dbReference>
<dbReference type="SUPFAM" id="SSF54001">
    <property type="entry name" value="Cysteine proteinases"/>
    <property type="match status" value="1"/>
</dbReference>
<dbReference type="PROSITE" id="PS00640">
    <property type="entry name" value="THIOL_PROTEASE_ASN"/>
    <property type="match status" value="1"/>
</dbReference>
<dbReference type="PROSITE" id="PS00139">
    <property type="entry name" value="THIOL_PROTEASE_CYS"/>
    <property type="match status" value="1"/>
</dbReference>
<dbReference type="PROSITE" id="PS00639">
    <property type="entry name" value="THIOL_PROTEASE_HIS"/>
    <property type="match status" value="1"/>
</dbReference>
<organism>
    <name type="scientific">Carica papaya</name>
    <name type="common">Papaya</name>
    <dbReference type="NCBI Taxonomy" id="3649"/>
    <lineage>
        <taxon>Eukaryota</taxon>
        <taxon>Viridiplantae</taxon>
        <taxon>Streptophyta</taxon>
        <taxon>Embryophyta</taxon>
        <taxon>Tracheophyta</taxon>
        <taxon>Spermatophyta</taxon>
        <taxon>Magnoliopsida</taxon>
        <taxon>eudicotyledons</taxon>
        <taxon>Gunneridae</taxon>
        <taxon>Pentapetalae</taxon>
        <taxon>rosids</taxon>
        <taxon>malvids</taxon>
        <taxon>Brassicales</taxon>
        <taxon>Caricaceae</taxon>
        <taxon>Carica</taxon>
    </lineage>
</organism>
<reference key="1">
    <citation type="submission" date="1995-05" db="EMBL/GenBank/DDBJ databases">
        <authorList>
            <person name="Baker K.C."/>
            <person name="Revell D.F."/>
            <person name="Cummings N.J."/>
            <person name="Collins M.E."/>
            <person name="Goodenough P.W."/>
        </authorList>
    </citation>
    <scope>NUCLEOTIDE SEQUENCE [MRNA]</scope>
    <source>
        <tissue>Leaf</tissue>
    </source>
</reference>
<reference key="2">
    <citation type="journal article" date="1988" name="Biol. Chem. Hoppe-Seyler">
        <title>The thiol proteinases from the latex of Carica papaya L. II. The primary structure of proteinase omega.</title>
        <authorList>
            <person name="Dubois T."/>
            <person name="Kleinschmidt T."/>
            <person name="Schnek A.G."/>
            <person name="Looze Y."/>
            <person name="Braunitzer G."/>
        </authorList>
    </citation>
    <scope>PROTEIN SEQUENCE OF 133-348</scope>
    <scope>CATALYTIC ACTIVITY</scope>
    <source>
        <tissue>Latex</tissue>
    </source>
</reference>
<reference key="3">
    <citation type="submission" date="1990-02" db="EMBL/GenBank/DDBJ databases">
        <authorList>
            <person name="Collins M.E."/>
            <person name="Revell D.F."/>
            <person name="Sumner I.G."/>
            <person name="Pickersgill R.W."/>
            <person name="Goodenough P.W."/>
        </authorList>
    </citation>
    <scope>NUCLEOTIDE SEQUENCE [MRNA] OF 237-348</scope>
    <source>
        <tissue>Leaf</tissue>
    </source>
</reference>
<reference key="4">
    <citation type="journal article" date="1990" name="FEBS Lett.">
        <title>Selective cleavage of glycyl bonds by papaya proteinase IV.</title>
        <authorList>
            <person name="Buttle D.J."/>
            <person name="Ritonja A."/>
            <person name="Pearl L.H."/>
            <person name="Turk V."/>
            <person name="Barrett A.J."/>
        </authorList>
    </citation>
    <scope>FUNCTION</scope>
    <scope>CATALYTIC ACTIVITY</scope>
    <scope>BIOPHYSICOCHEMICAL PROPERTIES</scope>
</reference>
<reference key="5">
    <citation type="journal article" date="1991" name="Acta Crystallogr. B">
        <title>Determination of the structure of papaya protease omega.</title>
        <authorList>
            <person name="Pickersgill R.W."/>
            <person name="Rizkallah P."/>
            <person name="Harris G.W."/>
            <person name="Goodenough P.W."/>
        </authorList>
    </citation>
    <scope>X-RAY CRYSTALLOGRAPHY (1.80 ANGSTROMS) OF 133-348</scope>
    <scope>DISULFIDE BONDS</scope>
</reference>
<reference key="6">
    <citation type="journal article" date="1996" name="FEBS Lett.">
        <title>Crystal structure of a caricain D158E mutant in complex with E-64.</title>
        <authorList>
            <person name="Katerelos N.A."/>
            <person name="Taylor M.A.J."/>
            <person name="Scott M."/>
            <person name="Goodenough P.W."/>
            <person name="Pickersgill R.W."/>
        </authorList>
    </citation>
    <scope>X-RAY CRYSTALLOGRAPHY (2.00 ANGSTROMS) OF 133-348 OF MUTANT GLU-290 IN COMPLEX WITH E64</scope>
    <scope>DISULFIDE BONDS</scope>
    <scope>ACTIVITY REGULATION</scope>
</reference>
<reference key="7">
    <citation type="journal article" date="1996" name="Structure">
        <title>The prosequence of procaricain forms an alpha-helical domain that prevents access to the substrate-binding cleft.</title>
        <authorList>
            <person name="Groves M.R."/>
            <person name="Taylor M.A."/>
            <person name="Scott M."/>
            <person name="Cummings N.J."/>
            <person name="Pickersgill R.W."/>
            <person name="Jenkins J.A."/>
        </authorList>
    </citation>
    <scope>X-RAY CRYSTALLOGRAPHY (3.20 ANGSTROMS) OF 27-348</scope>
    <scope>DISULFIDE BONDS</scope>
</reference>
<keyword id="KW-0002">3D-structure</keyword>
<keyword id="KW-0903">Direct protein sequencing</keyword>
<keyword id="KW-1015">Disulfide bond</keyword>
<keyword id="KW-0325">Glycoprotein</keyword>
<keyword id="KW-0378">Hydrolase</keyword>
<keyword id="KW-0645">Protease</keyword>
<keyword id="KW-0732">Signal</keyword>
<keyword id="KW-0788">Thiol protease</keyword>
<keyword id="KW-0865">Zymogen</keyword>
<sequence length="348" mass="38788">MAMIPSISKLLFVAICLFVHMSVSFGDFSIVGYSQDDLTSTERLIQLFNSWMLNHNKFYENVDEKLYRFEIFKDNLNYIDETNKKNNSYWLGLNEFADLSNDEFNEKYVGSLIDATIEQSYDEEFINEDTVNLPENVDWRKKGAVTPVRHQGSCGSCWAFSAVATVEGINKIRTGKLVELSEQELVDCERRSHGCKGGYPPYALEYVAKNGIHLRSKYPYKAKQGTCRAKQVGGPIVKTSGVGRVQPNNEGNLLNAIAKQPVSVVVESKGRPFQLYKGGIFEGPCGTKVDHAVTAVGYGKSGGKGYILIKNSWGTAWGEKGYIRIKRAPGNSPGVCGLYKSSYYPTKN</sequence>
<name>PAPA3_CARPA</name>
<feature type="signal peptide" evidence="1">
    <location>
        <begin position="1"/>
        <end position="16"/>
    </location>
</feature>
<feature type="propeptide" id="PRO_0000026410" description="Activation peptide" evidence="7">
    <location>
        <begin position="17"/>
        <end position="132"/>
    </location>
</feature>
<feature type="chain" id="PRO_0000026411" description="Caricain">
    <location>
        <begin position="133"/>
        <end position="348"/>
    </location>
</feature>
<feature type="active site" evidence="3 11 12">
    <location>
        <position position="157"/>
    </location>
</feature>
<feature type="active site" evidence="4">
    <location>
        <position position="291"/>
    </location>
</feature>
<feature type="active site" evidence="5">
    <location>
        <position position="311"/>
    </location>
</feature>
<feature type="binding site" description="covalent" evidence="8 12">
    <location>
        <position position="157"/>
    </location>
    <ligand>
        <name>E64</name>
        <dbReference type="ChEBI" id="CHEBI:192370"/>
        <note>inhibitor; produced by Aspergillus japonicus</note>
    </ligand>
</feature>
<feature type="glycosylation site" description="N-linked (GlcNAc...) asparagine" evidence="2">
    <location>
        <position position="86"/>
    </location>
</feature>
<feature type="disulfide bond" evidence="8 9 10 12 13 14">
    <location>
        <begin position="154"/>
        <end position="195"/>
    </location>
</feature>
<feature type="disulfide bond" evidence="8 9 10 12 13 14">
    <location>
        <begin position="188"/>
        <end position="227"/>
    </location>
</feature>
<feature type="disulfide bond" evidence="8 9 10 12 13 14">
    <location>
        <begin position="285"/>
        <end position="336"/>
    </location>
</feature>
<feature type="helix" evidence="16">
    <location>
        <begin position="40"/>
        <end position="53"/>
    </location>
</feature>
<feature type="turn" evidence="16">
    <location>
        <begin position="54"/>
        <end position="56"/>
    </location>
</feature>
<feature type="helix" evidence="16">
    <location>
        <begin position="62"/>
        <end position="83"/>
    </location>
</feature>
<feature type="strand" evidence="16">
    <location>
        <begin position="88"/>
        <end position="91"/>
    </location>
</feature>
<feature type="turn" evidence="16">
    <location>
        <begin position="95"/>
        <end position="98"/>
    </location>
</feature>
<feature type="helix" evidence="16">
    <location>
        <begin position="101"/>
        <end position="108"/>
    </location>
</feature>
<feature type="strand" evidence="16">
    <location>
        <begin position="122"/>
        <end position="124"/>
    </location>
</feature>
<feature type="turn" evidence="17">
    <location>
        <begin position="139"/>
        <end position="143"/>
    </location>
</feature>
<feature type="strand" evidence="17">
    <location>
        <begin position="153"/>
        <end position="155"/>
    </location>
</feature>
<feature type="helix" evidence="17">
    <location>
        <begin position="157"/>
        <end position="174"/>
    </location>
</feature>
<feature type="helix" evidence="17">
    <location>
        <begin position="182"/>
        <end position="188"/>
    </location>
</feature>
<feature type="strand" evidence="17">
    <location>
        <begin position="190"/>
        <end position="192"/>
    </location>
</feature>
<feature type="helix" evidence="16">
    <location>
        <begin position="194"/>
        <end position="196"/>
    </location>
</feature>
<feature type="helix" evidence="17">
    <location>
        <begin position="200"/>
        <end position="210"/>
    </location>
</feature>
<feature type="strand" evidence="15">
    <location>
        <begin position="212"/>
        <end position="214"/>
    </location>
</feature>
<feature type="turn" evidence="17">
    <location>
        <begin position="215"/>
        <end position="217"/>
    </location>
</feature>
<feature type="helix" evidence="17">
    <location>
        <begin position="229"/>
        <end position="231"/>
    </location>
</feature>
<feature type="strand" evidence="17">
    <location>
        <begin position="241"/>
        <end position="244"/>
    </location>
</feature>
<feature type="strand" evidence="15">
    <location>
        <begin position="247"/>
        <end position="249"/>
    </location>
</feature>
<feature type="helix" evidence="17">
    <location>
        <begin position="250"/>
        <end position="259"/>
    </location>
</feature>
<feature type="strand" evidence="17">
    <location>
        <begin position="262"/>
        <end position="266"/>
    </location>
</feature>
<feature type="helix" evidence="17">
    <location>
        <begin position="271"/>
        <end position="275"/>
    </location>
</feature>
<feature type="strand" evidence="17">
    <location>
        <begin position="278"/>
        <end position="281"/>
    </location>
</feature>
<feature type="strand" evidence="17">
    <location>
        <begin position="291"/>
        <end position="301"/>
    </location>
</feature>
<feature type="strand" evidence="17">
    <location>
        <begin position="304"/>
        <end position="310"/>
    </location>
</feature>
<feature type="strand" evidence="17">
    <location>
        <begin position="315"/>
        <end position="317"/>
    </location>
</feature>
<feature type="strand" evidence="17">
    <location>
        <begin position="322"/>
        <end position="326"/>
    </location>
</feature>
<feature type="strand" evidence="17">
    <location>
        <begin position="330"/>
        <end position="333"/>
    </location>
</feature>
<feature type="helix" evidence="17">
    <location>
        <begin position="335"/>
        <end position="337"/>
    </location>
</feature>
<feature type="strand" evidence="17">
    <location>
        <begin position="343"/>
        <end position="346"/>
    </location>
</feature>
<proteinExistence type="evidence at protein level"/>
<comment type="function">
    <text evidence="6">Cysteine proteinase with a high level of diversity in substrate specificity.</text>
</comment>
<comment type="catalytic activity">
    <reaction evidence="6">
        <text>Hydrolysis of proteins with broad specificity for peptide bonds, similar to those of papain and chymopapain.</text>
        <dbReference type="EC" id="3.4.22.30"/>
    </reaction>
</comment>
<comment type="activity regulation">
    <text evidence="8">Repressed by the active-site-directed cysteine protease inhibitor E64 (L-trans-epoxysuccinyl-leucylamide-(4-guanido)-butane) produced by Aspergillus japonicus.</text>
</comment>
<comment type="biophysicochemical properties">
    <kinetics>
        <KM evidence="6">4.2 mM for Boc-Ala-Ala-Gly-NHPhNO(2)</KM>
        <KM evidence="6">0.17 mM for Boc-Ala-Ala-Gly-NHMec</KM>
        <text evidence="6">kcat is 0.5 sec(-1) with Boc-Ala-Ala-Gly-NHPhNO(2) as substrate (PubMed:2404797). kcat is 0.1 sec(-1) with Boc-Ala-Ala-Gly-NHMec as substrate (PubMed:2404797).</text>
    </kinetics>
</comment>
<comment type="subunit">
    <text>Monomer.</text>
</comment>
<comment type="similarity">
    <text evidence="3 4 5">Belongs to the peptidase C1 family.</text>
</comment>
<accession>P10056</accession>
<protein>
    <recommendedName>
        <fullName>Caricain</fullName>
        <ecNumber evidence="6">3.4.22.30</ecNumber>
    </recommendedName>
    <alternativeName>
        <fullName>Papaya peptidase A</fullName>
    </alternativeName>
    <alternativeName>
        <fullName>Papaya proteinase III</fullName>
        <shortName>PPIII</shortName>
    </alternativeName>
    <alternativeName>
        <fullName>Papaya proteinase omega</fullName>
    </alternativeName>
</protein>
<evidence type="ECO:0000255" key="1"/>
<evidence type="ECO:0000255" key="2">
    <source>
        <dbReference type="PROSITE-ProRule" id="PRU00498"/>
    </source>
</evidence>
<evidence type="ECO:0000255" key="3">
    <source>
        <dbReference type="PROSITE-ProRule" id="PRU10088"/>
    </source>
</evidence>
<evidence type="ECO:0000255" key="4">
    <source>
        <dbReference type="PROSITE-ProRule" id="PRU10089"/>
    </source>
</evidence>
<evidence type="ECO:0000255" key="5">
    <source>
        <dbReference type="PROSITE-ProRule" id="PRU10090"/>
    </source>
</evidence>
<evidence type="ECO:0000269" key="6">
    <source>
    </source>
</evidence>
<evidence type="ECO:0000269" key="7">
    <source>
    </source>
</evidence>
<evidence type="ECO:0000269" key="8">
    <source>
    </source>
</evidence>
<evidence type="ECO:0000269" key="9">
    <source>
    </source>
</evidence>
<evidence type="ECO:0000269" key="10">
    <source ref="5"/>
</evidence>
<evidence type="ECO:0000305" key="11">
    <source>
    </source>
</evidence>
<evidence type="ECO:0007744" key="12">
    <source>
        <dbReference type="PDB" id="1MEG"/>
    </source>
</evidence>
<evidence type="ECO:0007744" key="13">
    <source>
        <dbReference type="PDB" id="1PCI"/>
    </source>
</evidence>
<evidence type="ECO:0007744" key="14">
    <source>
        <dbReference type="PDB" id="1PPO"/>
    </source>
</evidence>
<evidence type="ECO:0007829" key="15">
    <source>
        <dbReference type="PDB" id="1MEG"/>
    </source>
</evidence>
<evidence type="ECO:0007829" key="16">
    <source>
        <dbReference type="PDB" id="1PCI"/>
    </source>
</evidence>
<evidence type="ECO:0007829" key="17">
    <source>
        <dbReference type="PDB" id="1PPO"/>
    </source>
</evidence>